<sequence length="108" mass="11643">MIPGEIITPDGEIELNAGRNTVKLSVANAGDRPIQVGSHFHFYEVNHGLIFDRELALGMRLDIPAGTAVRFEPGDEKEVTLVPLVGSREVYGFNGRVNGEINAEGRGG</sequence>
<dbReference type="EC" id="3.5.1.5" evidence="1"/>
<dbReference type="EMBL" id="CP000117">
    <property type="protein sequence ID" value="ABA23226.1"/>
    <property type="molecule type" value="Genomic_DNA"/>
</dbReference>
<dbReference type="SMR" id="Q3M710"/>
<dbReference type="STRING" id="240292.Ava_3620"/>
<dbReference type="KEGG" id="ava:Ava_3620"/>
<dbReference type="eggNOG" id="COG0832">
    <property type="taxonomic scope" value="Bacteria"/>
</dbReference>
<dbReference type="HOGENOM" id="CLU_129707_1_1_3"/>
<dbReference type="UniPathway" id="UPA00258">
    <property type="reaction ID" value="UER00370"/>
</dbReference>
<dbReference type="Proteomes" id="UP000002533">
    <property type="component" value="Chromosome"/>
</dbReference>
<dbReference type="GO" id="GO:0035550">
    <property type="term" value="C:urease complex"/>
    <property type="evidence" value="ECO:0007669"/>
    <property type="project" value="InterPro"/>
</dbReference>
<dbReference type="GO" id="GO:0009039">
    <property type="term" value="F:urease activity"/>
    <property type="evidence" value="ECO:0007669"/>
    <property type="project" value="UniProtKB-UniRule"/>
</dbReference>
<dbReference type="GO" id="GO:0043419">
    <property type="term" value="P:urea catabolic process"/>
    <property type="evidence" value="ECO:0007669"/>
    <property type="project" value="UniProtKB-UniRule"/>
</dbReference>
<dbReference type="CDD" id="cd00407">
    <property type="entry name" value="Urease_beta"/>
    <property type="match status" value="1"/>
</dbReference>
<dbReference type="FunFam" id="2.10.150.10:FF:000001">
    <property type="entry name" value="Urease subunit beta"/>
    <property type="match status" value="1"/>
</dbReference>
<dbReference type="Gene3D" id="2.10.150.10">
    <property type="entry name" value="Urease, beta subunit"/>
    <property type="match status" value="1"/>
</dbReference>
<dbReference type="HAMAP" id="MF_01954">
    <property type="entry name" value="Urease_beta"/>
    <property type="match status" value="1"/>
</dbReference>
<dbReference type="InterPro" id="IPR002019">
    <property type="entry name" value="Urease_beta-like"/>
</dbReference>
<dbReference type="InterPro" id="IPR036461">
    <property type="entry name" value="Urease_betasu_sf"/>
</dbReference>
<dbReference type="InterPro" id="IPR050069">
    <property type="entry name" value="Urease_subunit"/>
</dbReference>
<dbReference type="NCBIfam" id="NF009682">
    <property type="entry name" value="PRK13203.1"/>
    <property type="match status" value="1"/>
</dbReference>
<dbReference type="NCBIfam" id="TIGR00192">
    <property type="entry name" value="urease_beta"/>
    <property type="match status" value="1"/>
</dbReference>
<dbReference type="PANTHER" id="PTHR33569">
    <property type="entry name" value="UREASE"/>
    <property type="match status" value="1"/>
</dbReference>
<dbReference type="PANTHER" id="PTHR33569:SF1">
    <property type="entry name" value="UREASE"/>
    <property type="match status" value="1"/>
</dbReference>
<dbReference type="Pfam" id="PF00699">
    <property type="entry name" value="Urease_beta"/>
    <property type="match status" value="1"/>
</dbReference>
<dbReference type="SUPFAM" id="SSF51278">
    <property type="entry name" value="Urease, beta-subunit"/>
    <property type="match status" value="1"/>
</dbReference>
<gene>
    <name evidence="1" type="primary">ureB</name>
    <name type="ordered locus">Ava_3620</name>
</gene>
<name>URE2_TRIV2</name>
<organism>
    <name type="scientific">Trichormus variabilis (strain ATCC 29413 / PCC 7937)</name>
    <name type="common">Anabaena variabilis</name>
    <dbReference type="NCBI Taxonomy" id="240292"/>
    <lineage>
        <taxon>Bacteria</taxon>
        <taxon>Bacillati</taxon>
        <taxon>Cyanobacteriota</taxon>
        <taxon>Cyanophyceae</taxon>
        <taxon>Nostocales</taxon>
        <taxon>Nostocaceae</taxon>
        <taxon>Trichormus</taxon>
    </lineage>
</organism>
<evidence type="ECO:0000255" key="1">
    <source>
        <dbReference type="HAMAP-Rule" id="MF_01954"/>
    </source>
</evidence>
<comment type="catalytic activity">
    <reaction evidence="1">
        <text>urea + 2 H2O + H(+) = hydrogencarbonate + 2 NH4(+)</text>
        <dbReference type="Rhea" id="RHEA:20557"/>
        <dbReference type="ChEBI" id="CHEBI:15377"/>
        <dbReference type="ChEBI" id="CHEBI:15378"/>
        <dbReference type="ChEBI" id="CHEBI:16199"/>
        <dbReference type="ChEBI" id="CHEBI:17544"/>
        <dbReference type="ChEBI" id="CHEBI:28938"/>
        <dbReference type="EC" id="3.5.1.5"/>
    </reaction>
</comment>
<comment type="pathway">
    <text evidence="1">Nitrogen metabolism; urea degradation; CO(2) and NH(3) from urea (urease route): step 1/1.</text>
</comment>
<comment type="subunit">
    <text evidence="1">Heterotrimer of UreA (gamma), UreB (beta) and UreC (alpha) subunits. Three heterotrimers associate to form the active enzyme.</text>
</comment>
<comment type="subcellular location">
    <subcellularLocation>
        <location evidence="1">Cytoplasm</location>
    </subcellularLocation>
</comment>
<comment type="similarity">
    <text evidence="1">Belongs to the urease beta subunit family.</text>
</comment>
<keyword id="KW-0963">Cytoplasm</keyword>
<keyword id="KW-0378">Hydrolase</keyword>
<accession>Q3M710</accession>
<protein>
    <recommendedName>
        <fullName evidence="1">Urease subunit beta</fullName>
        <ecNumber evidence="1">3.5.1.5</ecNumber>
    </recommendedName>
    <alternativeName>
        <fullName evidence="1">Urea amidohydrolase subunit beta</fullName>
    </alternativeName>
</protein>
<reference key="1">
    <citation type="journal article" date="2014" name="Stand. Genomic Sci.">
        <title>Complete genome sequence of Anabaena variabilis ATCC 29413.</title>
        <authorList>
            <person name="Thiel T."/>
            <person name="Pratte B.S."/>
            <person name="Zhong J."/>
            <person name="Goodwin L."/>
            <person name="Copeland A."/>
            <person name="Lucas S."/>
            <person name="Han C."/>
            <person name="Pitluck S."/>
            <person name="Land M.L."/>
            <person name="Kyrpides N.C."/>
            <person name="Woyke T."/>
        </authorList>
    </citation>
    <scope>NUCLEOTIDE SEQUENCE [LARGE SCALE GENOMIC DNA]</scope>
    <source>
        <strain>ATCC 29413 / PCC 7937</strain>
    </source>
</reference>
<proteinExistence type="inferred from homology"/>
<feature type="chain" id="PRO_0000234225" description="Urease subunit beta">
    <location>
        <begin position="1"/>
        <end position="108"/>
    </location>
</feature>